<gene>
    <name evidence="1" type="primary">rimM</name>
    <name type="ordered locus">BMA0402</name>
</gene>
<accession>Q62M51</accession>
<name>RIMM_BURMA</name>
<organism>
    <name type="scientific">Burkholderia mallei (strain ATCC 23344)</name>
    <dbReference type="NCBI Taxonomy" id="243160"/>
    <lineage>
        <taxon>Bacteria</taxon>
        <taxon>Pseudomonadati</taxon>
        <taxon>Pseudomonadota</taxon>
        <taxon>Betaproteobacteria</taxon>
        <taxon>Burkholderiales</taxon>
        <taxon>Burkholderiaceae</taxon>
        <taxon>Burkholderia</taxon>
        <taxon>pseudomallei group</taxon>
    </lineage>
</organism>
<dbReference type="EMBL" id="CP000010">
    <property type="protein sequence ID" value="AAU48779.1"/>
    <property type="status" value="ALT_INIT"/>
    <property type="molecule type" value="Genomic_DNA"/>
</dbReference>
<dbReference type="RefSeq" id="WP_004195969.1">
    <property type="nucleotide sequence ID" value="NC_006348.1"/>
</dbReference>
<dbReference type="RefSeq" id="YP_102217.1">
    <property type="nucleotide sequence ID" value="NC_006348.1"/>
</dbReference>
<dbReference type="SMR" id="Q62M51"/>
<dbReference type="GeneID" id="93061078"/>
<dbReference type="KEGG" id="bma:BMA0402"/>
<dbReference type="PATRIC" id="fig|243160.12.peg.407"/>
<dbReference type="eggNOG" id="COG0806">
    <property type="taxonomic scope" value="Bacteria"/>
</dbReference>
<dbReference type="HOGENOM" id="CLU_077636_1_0_4"/>
<dbReference type="Proteomes" id="UP000006693">
    <property type="component" value="Chromosome 1"/>
</dbReference>
<dbReference type="GO" id="GO:0005737">
    <property type="term" value="C:cytoplasm"/>
    <property type="evidence" value="ECO:0007669"/>
    <property type="project" value="UniProtKB-SubCell"/>
</dbReference>
<dbReference type="GO" id="GO:0005840">
    <property type="term" value="C:ribosome"/>
    <property type="evidence" value="ECO:0007669"/>
    <property type="project" value="InterPro"/>
</dbReference>
<dbReference type="GO" id="GO:0043022">
    <property type="term" value="F:ribosome binding"/>
    <property type="evidence" value="ECO:0007669"/>
    <property type="project" value="InterPro"/>
</dbReference>
<dbReference type="GO" id="GO:0042274">
    <property type="term" value="P:ribosomal small subunit biogenesis"/>
    <property type="evidence" value="ECO:0007669"/>
    <property type="project" value="UniProtKB-UniRule"/>
</dbReference>
<dbReference type="GO" id="GO:0006364">
    <property type="term" value="P:rRNA processing"/>
    <property type="evidence" value="ECO:0007669"/>
    <property type="project" value="UniProtKB-UniRule"/>
</dbReference>
<dbReference type="Gene3D" id="2.30.30.240">
    <property type="entry name" value="PRC-barrel domain"/>
    <property type="match status" value="1"/>
</dbReference>
<dbReference type="Gene3D" id="2.40.30.60">
    <property type="entry name" value="RimM"/>
    <property type="match status" value="1"/>
</dbReference>
<dbReference type="HAMAP" id="MF_00014">
    <property type="entry name" value="Ribosome_mat_RimM"/>
    <property type="match status" value="1"/>
</dbReference>
<dbReference type="InterPro" id="IPR011033">
    <property type="entry name" value="PRC_barrel-like_sf"/>
</dbReference>
<dbReference type="InterPro" id="IPR056792">
    <property type="entry name" value="PRC_RimM"/>
</dbReference>
<dbReference type="InterPro" id="IPR011961">
    <property type="entry name" value="RimM"/>
</dbReference>
<dbReference type="InterPro" id="IPR002676">
    <property type="entry name" value="RimM_N"/>
</dbReference>
<dbReference type="InterPro" id="IPR036976">
    <property type="entry name" value="RimM_N_sf"/>
</dbReference>
<dbReference type="InterPro" id="IPR009000">
    <property type="entry name" value="Transl_B-barrel_sf"/>
</dbReference>
<dbReference type="NCBIfam" id="TIGR02273">
    <property type="entry name" value="16S_RimM"/>
    <property type="match status" value="1"/>
</dbReference>
<dbReference type="PANTHER" id="PTHR33692">
    <property type="entry name" value="RIBOSOME MATURATION FACTOR RIMM"/>
    <property type="match status" value="1"/>
</dbReference>
<dbReference type="PANTHER" id="PTHR33692:SF1">
    <property type="entry name" value="RIBOSOME MATURATION FACTOR RIMM"/>
    <property type="match status" value="1"/>
</dbReference>
<dbReference type="Pfam" id="PF24986">
    <property type="entry name" value="PRC_RimM"/>
    <property type="match status" value="1"/>
</dbReference>
<dbReference type="Pfam" id="PF01782">
    <property type="entry name" value="RimM"/>
    <property type="match status" value="1"/>
</dbReference>
<dbReference type="SUPFAM" id="SSF50346">
    <property type="entry name" value="PRC-barrel domain"/>
    <property type="match status" value="1"/>
</dbReference>
<dbReference type="SUPFAM" id="SSF50447">
    <property type="entry name" value="Translation proteins"/>
    <property type="match status" value="1"/>
</dbReference>
<reference key="1">
    <citation type="journal article" date="2004" name="Proc. Natl. Acad. Sci. U.S.A.">
        <title>Structural flexibility in the Burkholderia mallei genome.</title>
        <authorList>
            <person name="Nierman W.C."/>
            <person name="DeShazer D."/>
            <person name="Kim H.S."/>
            <person name="Tettelin H."/>
            <person name="Nelson K.E."/>
            <person name="Feldblyum T.V."/>
            <person name="Ulrich R.L."/>
            <person name="Ronning C.M."/>
            <person name="Brinkac L.M."/>
            <person name="Daugherty S.C."/>
            <person name="Davidsen T.D."/>
            <person name="DeBoy R.T."/>
            <person name="Dimitrov G."/>
            <person name="Dodson R.J."/>
            <person name="Durkin A.S."/>
            <person name="Gwinn M.L."/>
            <person name="Haft D.H."/>
            <person name="Khouri H.M."/>
            <person name="Kolonay J.F."/>
            <person name="Madupu R."/>
            <person name="Mohammoud Y."/>
            <person name="Nelson W.C."/>
            <person name="Radune D."/>
            <person name="Romero C.M."/>
            <person name="Sarria S."/>
            <person name="Selengut J."/>
            <person name="Shamblin C."/>
            <person name="Sullivan S.A."/>
            <person name="White O."/>
            <person name="Yu Y."/>
            <person name="Zafar N."/>
            <person name="Zhou L."/>
            <person name="Fraser C.M."/>
        </authorList>
    </citation>
    <scope>NUCLEOTIDE SEQUENCE [LARGE SCALE GENOMIC DNA]</scope>
    <source>
        <strain>ATCC 23344</strain>
    </source>
</reference>
<feature type="chain" id="PRO_0000163269" description="Ribosome maturation factor RimM">
    <location>
        <begin position="1"/>
        <end position="229"/>
    </location>
</feature>
<feature type="domain" description="PRC barrel" evidence="1">
    <location>
        <begin position="148"/>
        <end position="229"/>
    </location>
</feature>
<feature type="region of interest" description="Disordered" evidence="2">
    <location>
        <begin position="1"/>
        <end position="21"/>
    </location>
</feature>
<keyword id="KW-0143">Chaperone</keyword>
<keyword id="KW-0963">Cytoplasm</keyword>
<keyword id="KW-1185">Reference proteome</keyword>
<keyword id="KW-0690">Ribosome biogenesis</keyword>
<keyword id="KW-0698">rRNA processing</keyword>
<comment type="function">
    <text evidence="1">An accessory protein needed during the final step in the assembly of 30S ribosomal subunit, possibly for assembly of the head region. Essential for efficient processing of 16S rRNA. May be needed both before and after RbfA during the maturation of 16S rRNA. It has affinity for free ribosomal 30S subunits but not for 70S ribosomes.</text>
</comment>
<comment type="subunit">
    <text evidence="1">Binds ribosomal protein uS19.</text>
</comment>
<comment type="subcellular location">
    <subcellularLocation>
        <location evidence="1">Cytoplasm</location>
    </subcellularLocation>
</comment>
<comment type="domain">
    <text evidence="1">The PRC barrel domain binds ribosomal protein uS19.</text>
</comment>
<comment type="similarity">
    <text evidence="1">Belongs to the RimM family.</text>
</comment>
<comment type="sequence caution" evidence="3">
    <conflict type="erroneous initiation">
        <sequence resource="EMBL-CDS" id="AAU48779"/>
    </conflict>
</comment>
<sequence length="229" mass="24430">MAGHDSGNAKRGRSPSFGVFVRKPVERAPAKGASDGAVDSQAIRIDAAQSWPDDAVEVGAVVDAYGLKGWVKLAAHAGAGRGGDALLKARDWWLQKGAERKFARVTQAKLHGDTVVAHPDGSVDRDTALALRGARVFVRRGDFPALAADEFYWVDLIGLDVVNEAGVALGKIADMIDNGVHSIMRVEYPATGKDGRPKTGERLIPFVGVYVKAVEQAAGRVVVDWEADY</sequence>
<evidence type="ECO:0000255" key="1">
    <source>
        <dbReference type="HAMAP-Rule" id="MF_00014"/>
    </source>
</evidence>
<evidence type="ECO:0000256" key="2">
    <source>
        <dbReference type="SAM" id="MobiDB-lite"/>
    </source>
</evidence>
<evidence type="ECO:0000305" key="3"/>
<protein>
    <recommendedName>
        <fullName evidence="1">Ribosome maturation factor RimM</fullName>
    </recommendedName>
</protein>
<proteinExistence type="inferred from homology"/>